<comment type="function">
    <text evidence="1">Key component of the proton channel; it plays a direct role in the translocation of protons across the membrane.</text>
</comment>
<comment type="subunit">
    <text evidence="1">F-type ATPases have 2 components, CF(1) - the catalytic core - and CF(0) - the membrane proton channel. CF(1) has five subunits: alpha(3), beta(3), gamma(1), delta(1), epsilon(1). CF(0) has three main subunits: a(1), b(2) and c(9-12). The alpha and beta chains form an alternating ring which encloses part of the gamma chain. CF(1) is attached to CF(0) by a central stalk formed by the gamma and epsilon chains, while a peripheral stalk is formed by the delta and b chains.</text>
</comment>
<comment type="subcellular location">
    <subcellularLocation>
        <location evidence="1">Cell membrane</location>
        <topology evidence="1">Multi-pass membrane protein</topology>
    </subcellularLocation>
</comment>
<comment type="similarity">
    <text evidence="1">Belongs to the ATPase A chain family.</text>
</comment>
<dbReference type="EMBL" id="M90060">
    <property type="protein sequence ID" value="AAA26853.1"/>
    <property type="molecule type" value="Genomic_DNA"/>
</dbReference>
<dbReference type="EMBL" id="CP003504">
    <property type="protein sequence ID" value="AFM70619.1"/>
    <property type="molecule type" value="Genomic_DNA"/>
</dbReference>
<dbReference type="PIR" id="B43259">
    <property type="entry name" value="B43259"/>
</dbReference>
<dbReference type="RefSeq" id="WP_010718600.1">
    <property type="nucleotide sequence ID" value="NZ_KB946231.1"/>
</dbReference>
<dbReference type="SMR" id="P43454"/>
<dbReference type="GeneID" id="56786971"/>
<dbReference type="KEGG" id="ehr:EHR_08470"/>
<dbReference type="eggNOG" id="COG0356">
    <property type="taxonomic scope" value="Bacteria"/>
</dbReference>
<dbReference type="HOGENOM" id="CLU_041018_2_3_9"/>
<dbReference type="OrthoDB" id="9789241at2"/>
<dbReference type="Proteomes" id="UP000002895">
    <property type="component" value="Chromosome"/>
</dbReference>
<dbReference type="GO" id="GO:0005886">
    <property type="term" value="C:plasma membrane"/>
    <property type="evidence" value="ECO:0007669"/>
    <property type="project" value="UniProtKB-SubCell"/>
</dbReference>
<dbReference type="GO" id="GO:0045259">
    <property type="term" value="C:proton-transporting ATP synthase complex"/>
    <property type="evidence" value="ECO:0007669"/>
    <property type="project" value="UniProtKB-KW"/>
</dbReference>
<dbReference type="GO" id="GO:0046933">
    <property type="term" value="F:proton-transporting ATP synthase activity, rotational mechanism"/>
    <property type="evidence" value="ECO:0007669"/>
    <property type="project" value="UniProtKB-UniRule"/>
</dbReference>
<dbReference type="GO" id="GO:0042777">
    <property type="term" value="P:proton motive force-driven plasma membrane ATP synthesis"/>
    <property type="evidence" value="ECO:0007669"/>
    <property type="project" value="TreeGrafter"/>
</dbReference>
<dbReference type="CDD" id="cd00310">
    <property type="entry name" value="ATP-synt_Fo_a_6"/>
    <property type="match status" value="1"/>
</dbReference>
<dbReference type="Gene3D" id="1.20.120.220">
    <property type="entry name" value="ATP synthase, F0 complex, subunit A"/>
    <property type="match status" value="1"/>
</dbReference>
<dbReference type="HAMAP" id="MF_01393">
    <property type="entry name" value="ATP_synth_a_bact"/>
    <property type="match status" value="1"/>
</dbReference>
<dbReference type="InterPro" id="IPR045082">
    <property type="entry name" value="ATP_syn_F0_a_bact/chloroplast"/>
</dbReference>
<dbReference type="InterPro" id="IPR000568">
    <property type="entry name" value="ATP_synth_F0_asu"/>
</dbReference>
<dbReference type="InterPro" id="IPR023011">
    <property type="entry name" value="ATP_synth_F0_asu_AS"/>
</dbReference>
<dbReference type="InterPro" id="IPR035908">
    <property type="entry name" value="F0_ATP_A_sf"/>
</dbReference>
<dbReference type="NCBIfam" id="TIGR01131">
    <property type="entry name" value="ATP_synt_6_or_A"/>
    <property type="match status" value="1"/>
</dbReference>
<dbReference type="NCBIfam" id="NF004479">
    <property type="entry name" value="PRK05815.1-4"/>
    <property type="match status" value="1"/>
</dbReference>
<dbReference type="PANTHER" id="PTHR42823">
    <property type="entry name" value="ATP SYNTHASE SUBUNIT A, CHLOROPLASTIC"/>
    <property type="match status" value="1"/>
</dbReference>
<dbReference type="PANTHER" id="PTHR42823:SF3">
    <property type="entry name" value="ATP SYNTHASE SUBUNIT A, CHLOROPLASTIC"/>
    <property type="match status" value="1"/>
</dbReference>
<dbReference type="Pfam" id="PF00119">
    <property type="entry name" value="ATP-synt_A"/>
    <property type="match status" value="1"/>
</dbReference>
<dbReference type="PRINTS" id="PR00123">
    <property type="entry name" value="ATPASEA"/>
</dbReference>
<dbReference type="SUPFAM" id="SSF81336">
    <property type="entry name" value="F1F0 ATP synthase subunit A"/>
    <property type="match status" value="1"/>
</dbReference>
<dbReference type="PROSITE" id="PS00449">
    <property type="entry name" value="ATPASE_A"/>
    <property type="match status" value="1"/>
</dbReference>
<accession>P43454</accession>
<accession>I6TBE3</accession>
<protein>
    <recommendedName>
        <fullName evidence="1">ATP synthase subunit a</fullName>
    </recommendedName>
    <alternativeName>
        <fullName evidence="1">ATP synthase F0 sector subunit a</fullName>
    </alternativeName>
    <alternativeName>
        <fullName evidence="1">F-ATPase subunit 6</fullName>
    </alternativeName>
</protein>
<proteinExistence type="inferred from homology"/>
<feature type="chain" id="PRO_0000082055" description="ATP synthase subunit a">
    <location>
        <begin position="1"/>
        <end position="239"/>
    </location>
</feature>
<feature type="transmembrane region" description="Helical" evidence="1">
    <location>
        <begin position="17"/>
        <end position="37"/>
    </location>
</feature>
<feature type="transmembrane region" description="Helical" evidence="1">
    <location>
        <begin position="75"/>
        <end position="95"/>
    </location>
</feature>
<feature type="transmembrane region" description="Helical" evidence="1">
    <location>
        <begin position="113"/>
        <end position="133"/>
    </location>
</feature>
<feature type="transmembrane region" description="Helical" evidence="1">
    <location>
        <begin position="182"/>
        <end position="202"/>
    </location>
</feature>
<feature type="transmembrane region" description="Helical" evidence="1">
    <location>
        <begin position="206"/>
        <end position="226"/>
    </location>
</feature>
<feature type="sequence conflict" description="In Ref. 1; AAA26853." evidence="2" ref="1">
    <original>D</original>
    <variation>N</variation>
    <location>
        <position position="113"/>
    </location>
</feature>
<gene>
    <name evidence="1" type="primary">atpB</name>
    <name type="ordered locus">EHR_08470</name>
</gene>
<sequence>MDERSLTFHIGPVWFDGTVCMMVLLTCLIVFFLVYFFTRNLKMKPTGKQNALEWVIDFTRGIVTDNLPRKELNNFHLLAFTLFLFVFVANNIGLITKIVLPSETTLWKSPTADPFVTLTLAFIMITLTHLFGVKKLGFKGYFVNSFLKPYSFMFPMKLIEEFTNLLTLALRLYGNIYAGEVLLTLIANMMNNLGWFSLPLAIPLEMVWIAFSLFIGSIQAFVFVTLSMVYMSHKIEVEE</sequence>
<evidence type="ECO:0000255" key="1">
    <source>
        <dbReference type="HAMAP-Rule" id="MF_01393"/>
    </source>
</evidence>
<evidence type="ECO:0000305" key="2"/>
<name>ATP6_ENTHA</name>
<organism>
    <name type="scientific">Enterococcus hirae (strain ATCC 9790 / DSM 20160 / JCM 8729 / LMG 6399 / NBRC 3181 / NCIMB 6459 / NCDO 1258 / NCTC 12367 / WDCM 00089 / R)</name>
    <dbReference type="NCBI Taxonomy" id="768486"/>
    <lineage>
        <taxon>Bacteria</taxon>
        <taxon>Bacillati</taxon>
        <taxon>Bacillota</taxon>
        <taxon>Bacilli</taxon>
        <taxon>Lactobacillales</taxon>
        <taxon>Enterococcaceae</taxon>
        <taxon>Enterococcus</taxon>
    </lineage>
</organism>
<reference key="1">
    <citation type="journal article" date="1992" name="J. Bacteriol.">
        <title>Gene structure of Enterococcus hirae (Streptococcus faecalis) F1F0-ATPase, which functions as a regulator of cytoplasmic pH.</title>
        <authorList>
            <person name="Shibata C."/>
            <person name="Ehara T."/>
            <person name="Tomura K."/>
            <person name="Igarashi K."/>
            <person name="Kobayashi H."/>
        </authorList>
    </citation>
    <scope>NUCLEOTIDE SEQUENCE [GENOMIC DNA]</scope>
    <source>
        <strain>ATCC 9790 / DSM 20160 / JCM 8729 / LMG 6399 / NBRC 3181 / NCIMB 6459 / NCDO 1258 / NCTC 12367 / WDCM 00089 / R</strain>
    </source>
</reference>
<reference key="2">
    <citation type="journal article" date="2012" name="J. Bacteriol.">
        <title>Genome sequence of Enterococcus hirae (Streptococcus faecalis) ATCC 9790, a model organism for the study of ion transport, bioenergetics, and copper homeostasis.</title>
        <authorList>
            <person name="Gaechter T."/>
            <person name="Wunderlin C."/>
            <person name="Schmidheini T."/>
            <person name="Solioz M."/>
        </authorList>
    </citation>
    <scope>NUCLEOTIDE SEQUENCE [LARGE SCALE GENOMIC DNA]</scope>
    <source>
        <strain>ATCC 9790 / DSM 20160 / JCM 8729 / LMG 6399 / NBRC 3181 / NCIMB 6459 / NCDO 1258 / NCTC 12367 / WDCM 00089 / R</strain>
    </source>
</reference>
<keyword id="KW-0066">ATP synthesis</keyword>
<keyword id="KW-1003">Cell membrane</keyword>
<keyword id="KW-0138">CF(0)</keyword>
<keyword id="KW-0375">Hydrogen ion transport</keyword>
<keyword id="KW-0406">Ion transport</keyword>
<keyword id="KW-0472">Membrane</keyword>
<keyword id="KW-0812">Transmembrane</keyword>
<keyword id="KW-1133">Transmembrane helix</keyword>
<keyword id="KW-0813">Transport</keyword>